<accession>Q8R6K4</accession>
<feature type="chain" id="PRO_0000198560" description="Ribonuclease P protein component">
    <location>
        <begin position="1"/>
        <end position="116"/>
    </location>
</feature>
<sequence>MREKLTKLKKTQEFKRVYSNGKTVANRFIVMYYMPNGLQVNRAGYSVSKKIGKSVVRNRVKRLLHESFRLLNSNLRQGYDVVFVARGKIAEADFHTLKESIEKLLKKTPLYEEKER</sequence>
<comment type="function">
    <text evidence="1">RNaseP catalyzes the removal of the 5'-leader sequence from pre-tRNA to produce the mature 5'-terminus. It can also cleave other RNA substrates such as 4.5S RNA. The protein component plays an auxiliary but essential role in vivo by binding to the 5'-leader sequence and broadening the substrate specificity of the ribozyme.</text>
</comment>
<comment type="catalytic activity">
    <reaction evidence="1">
        <text>Endonucleolytic cleavage of RNA, removing 5'-extranucleotides from tRNA precursor.</text>
        <dbReference type="EC" id="3.1.26.5"/>
    </reaction>
</comment>
<comment type="subunit">
    <text evidence="1">Consists of a catalytic RNA component (M1 or rnpB) and a protein subunit.</text>
</comment>
<comment type="similarity">
    <text evidence="1">Belongs to the RnpA family.</text>
</comment>
<proteinExistence type="inferred from homology"/>
<protein>
    <recommendedName>
        <fullName evidence="1">Ribonuclease P protein component</fullName>
        <shortName evidence="1">RNase P protein</shortName>
        <shortName evidence="1">RNaseP protein</shortName>
        <ecNumber evidence="1">3.1.26.5</ecNumber>
    </recommendedName>
    <alternativeName>
        <fullName evidence="1">Protein C5</fullName>
    </alternativeName>
</protein>
<evidence type="ECO:0000255" key="1">
    <source>
        <dbReference type="HAMAP-Rule" id="MF_00227"/>
    </source>
</evidence>
<keyword id="KW-0255">Endonuclease</keyword>
<keyword id="KW-0378">Hydrolase</keyword>
<keyword id="KW-0540">Nuclease</keyword>
<keyword id="KW-1185">Reference proteome</keyword>
<keyword id="KW-0694">RNA-binding</keyword>
<keyword id="KW-0819">tRNA processing</keyword>
<reference key="1">
    <citation type="journal article" date="2002" name="Genome Res.">
        <title>A complete sequence of the T. tengcongensis genome.</title>
        <authorList>
            <person name="Bao Q."/>
            <person name="Tian Y."/>
            <person name="Li W."/>
            <person name="Xu Z."/>
            <person name="Xuan Z."/>
            <person name="Hu S."/>
            <person name="Dong W."/>
            <person name="Yang J."/>
            <person name="Chen Y."/>
            <person name="Xue Y."/>
            <person name="Xu Y."/>
            <person name="Lai X."/>
            <person name="Huang L."/>
            <person name="Dong X."/>
            <person name="Ma Y."/>
            <person name="Ling L."/>
            <person name="Tan H."/>
            <person name="Chen R."/>
            <person name="Wang J."/>
            <person name="Yu J."/>
            <person name="Yang H."/>
        </authorList>
    </citation>
    <scope>NUCLEOTIDE SEQUENCE [LARGE SCALE GENOMIC DNA]</scope>
    <source>
        <strain>DSM 15242 / JCM 11007 / NBRC 100824 / MB4</strain>
    </source>
</reference>
<gene>
    <name evidence="1" type="primary">rnpA</name>
    <name type="ordered locus">TTE2801</name>
</gene>
<organism>
    <name type="scientific">Caldanaerobacter subterraneus subsp. tengcongensis (strain DSM 15242 / JCM 11007 / NBRC 100824 / MB4)</name>
    <name type="common">Thermoanaerobacter tengcongensis</name>
    <dbReference type="NCBI Taxonomy" id="273068"/>
    <lineage>
        <taxon>Bacteria</taxon>
        <taxon>Bacillati</taxon>
        <taxon>Bacillota</taxon>
        <taxon>Clostridia</taxon>
        <taxon>Thermoanaerobacterales</taxon>
        <taxon>Thermoanaerobacteraceae</taxon>
        <taxon>Caldanaerobacter</taxon>
    </lineage>
</organism>
<name>RNPA_CALS4</name>
<dbReference type="EC" id="3.1.26.5" evidence="1"/>
<dbReference type="EMBL" id="AE008691">
    <property type="protein sequence ID" value="AAM25904.1"/>
    <property type="molecule type" value="Genomic_DNA"/>
</dbReference>
<dbReference type="RefSeq" id="WP_011026762.1">
    <property type="nucleotide sequence ID" value="NC_003869.1"/>
</dbReference>
<dbReference type="SMR" id="Q8R6K4"/>
<dbReference type="STRING" id="273068.TTE2801"/>
<dbReference type="KEGG" id="tte:TTE2801"/>
<dbReference type="eggNOG" id="COG0594">
    <property type="taxonomic scope" value="Bacteria"/>
</dbReference>
<dbReference type="HOGENOM" id="CLU_117179_9_3_9"/>
<dbReference type="OrthoDB" id="9810867at2"/>
<dbReference type="Proteomes" id="UP000000555">
    <property type="component" value="Chromosome"/>
</dbReference>
<dbReference type="GO" id="GO:0030677">
    <property type="term" value="C:ribonuclease P complex"/>
    <property type="evidence" value="ECO:0007669"/>
    <property type="project" value="TreeGrafter"/>
</dbReference>
<dbReference type="GO" id="GO:0042781">
    <property type="term" value="F:3'-tRNA processing endoribonuclease activity"/>
    <property type="evidence" value="ECO:0007669"/>
    <property type="project" value="TreeGrafter"/>
</dbReference>
<dbReference type="GO" id="GO:0004526">
    <property type="term" value="F:ribonuclease P activity"/>
    <property type="evidence" value="ECO:0007669"/>
    <property type="project" value="UniProtKB-UniRule"/>
</dbReference>
<dbReference type="GO" id="GO:0000049">
    <property type="term" value="F:tRNA binding"/>
    <property type="evidence" value="ECO:0007669"/>
    <property type="project" value="UniProtKB-UniRule"/>
</dbReference>
<dbReference type="GO" id="GO:0001682">
    <property type="term" value="P:tRNA 5'-leader removal"/>
    <property type="evidence" value="ECO:0007669"/>
    <property type="project" value="UniProtKB-UniRule"/>
</dbReference>
<dbReference type="Gene3D" id="3.30.230.10">
    <property type="match status" value="1"/>
</dbReference>
<dbReference type="HAMAP" id="MF_00227">
    <property type="entry name" value="RNase_P"/>
    <property type="match status" value="1"/>
</dbReference>
<dbReference type="InterPro" id="IPR020568">
    <property type="entry name" value="Ribosomal_Su5_D2-typ_SF"/>
</dbReference>
<dbReference type="InterPro" id="IPR014721">
    <property type="entry name" value="Ribsml_uS5_D2-typ_fold_subgr"/>
</dbReference>
<dbReference type="InterPro" id="IPR000100">
    <property type="entry name" value="RNase_P"/>
</dbReference>
<dbReference type="NCBIfam" id="TIGR00188">
    <property type="entry name" value="rnpA"/>
    <property type="match status" value="1"/>
</dbReference>
<dbReference type="PANTHER" id="PTHR33992">
    <property type="entry name" value="RIBONUCLEASE P PROTEIN COMPONENT"/>
    <property type="match status" value="1"/>
</dbReference>
<dbReference type="PANTHER" id="PTHR33992:SF1">
    <property type="entry name" value="RIBONUCLEASE P PROTEIN COMPONENT"/>
    <property type="match status" value="1"/>
</dbReference>
<dbReference type="Pfam" id="PF00825">
    <property type="entry name" value="Ribonuclease_P"/>
    <property type="match status" value="1"/>
</dbReference>
<dbReference type="SUPFAM" id="SSF54211">
    <property type="entry name" value="Ribosomal protein S5 domain 2-like"/>
    <property type="match status" value="1"/>
</dbReference>